<gene>
    <name type="primary">HAL22</name>
    <name type="synonym">MET221</name>
    <name type="ordered locus">CAALFM_C601030WA</name>
    <name type="ORF">CaO19.105</name>
    <name type="ORF">CaO19.7752</name>
</gene>
<organism>
    <name type="scientific">Candida albicans (strain SC5314 / ATCC MYA-2876)</name>
    <name type="common">Yeast</name>
    <dbReference type="NCBI Taxonomy" id="237561"/>
    <lineage>
        <taxon>Eukaryota</taxon>
        <taxon>Fungi</taxon>
        <taxon>Dikarya</taxon>
        <taxon>Ascomycota</taxon>
        <taxon>Saccharomycotina</taxon>
        <taxon>Pichiomycetes</taxon>
        <taxon>Debaryomycetaceae</taxon>
        <taxon>Candida/Lodderomyces clade</taxon>
        <taxon>Candida</taxon>
    </lineage>
</organism>
<proteinExistence type="inferred from homology"/>
<comment type="function">
    <text evidence="1">Phosphatase that converts adenosine 3'-phosphate 5'-phosphosulfate (PAPS) to adenosine 5'-phosphosulfate (APS) and 3'(2')-phosphoadenosine 5'-phosphate (PAP) to AMP. Regulates the flux of sulfur in the sulfur-activation pathway by converting PAPS to APS. Involved in salt tolerance.</text>
</comment>
<comment type="catalytic activity">
    <reaction evidence="1">
        <text>3'-phosphoadenylyl sulfate + H2O = adenosine 5'-phosphosulfate + phosphate</text>
        <dbReference type="Rhea" id="RHEA:77639"/>
        <dbReference type="ChEBI" id="CHEBI:15377"/>
        <dbReference type="ChEBI" id="CHEBI:43474"/>
        <dbReference type="ChEBI" id="CHEBI:58243"/>
        <dbReference type="ChEBI" id="CHEBI:58339"/>
        <dbReference type="EC" id="3.1.3.7"/>
    </reaction>
    <physiologicalReaction direction="left-to-right" evidence="1">
        <dbReference type="Rhea" id="RHEA:77640"/>
    </physiologicalReaction>
</comment>
<comment type="catalytic activity">
    <reaction evidence="1">
        <text>adenosine 3',5'-bisphosphate + H2O = AMP + phosphate</text>
        <dbReference type="Rhea" id="RHEA:10040"/>
        <dbReference type="ChEBI" id="CHEBI:15377"/>
        <dbReference type="ChEBI" id="CHEBI:43474"/>
        <dbReference type="ChEBI" id="CHEBI:58343"/>
        <dbReference type="ChEBI" id="CHEBI:456215"/>
        <dbReference type="EC" id="3.1.3.7"/>
    </reaction>
    <physiologicalReaction direction="left-to-right" evidence="1">
        <dbReference type="Rhea" id="RHEA:10041"/>
    </physiologicalReaction>
</comment>
<comment type="catalytic activity">
    <reaction evidence="1">
        <text>adenosine 2',5'-bisphosphate + H2O = AMP + phosphate</text>
        <dbReference type="Rhea" id="RHEA:77643"/>
        <dbReference type="ChEBI" id="CHEBI:15377"/>
        <dbReference type="ChEBI" id="CHEBI:43474"/>
        <dbReference type="ChEBI" id="CHEBI:194156"/>
        <dbReference type="ChEBI" id="CHEBI:456215"/>
        <dbReference type="EC" id="3.1.3.7"/>
    </reaction>
    <physiologicalReaction direction="left-to-right" evidence="1">
        <dbReference type="Rhea" id="RHEA:77644"/>
    </physiologicalReaction>
</comment>
<comment type="cofactor">
    <cofactor evidence="1">
        <name>Mg(2+)</name>
        <dbReference type="ChEBI" id="CHEBI:18420"/>
    </cofactor>
    <text evidence="1">Binds 3 Mg(2+) ions per subunit.</text>
</comment>
<comment type="similarity">
    <text evidence="2">Belongs to the inositol monophosphatase superfamily.</text>
</comment>
<accession>Q59XQ1</accession>
<accession>A0A1D8PPJ0</accession>
<accession>Q59WU6</accession>
<sequence length="358" mass="38753">MSHSTHPYQKELEVATLAVKRASLLTKQLSDSIVQTAKSGTLTKDDKSPVTIGDFASQAIINHAIKLNFPNDEIVGEEDSRELQENTGLADQMLQLITKIQKETSGYNDIVGTLTDKNEVYQSIDFGNSQGGSKGRFWALDPIDGTKGFLRGDQFAVCLALIEDGKVVLGVIGCPNLSENIVSNEEHSGVVGGLYSAVKGVGSFYSELFKEGAEPLSQQKRIKMQNHTNPSQLKVVEGVEKGHSSHSTQTEIKAKFGFDSATVAKQTINLDSQVKYCVLASGQADIYLRLPVNETYREKIWDHAAGNILIYESGGQVGDVTGSPLNFGNGRTLDSKGVIAANKGIFDKVIDAVTEVRK</sequence>
<dbReference type="EC" id="3.1.3.7" evidence="1"/>
<dbReference type="EMBL" id="CP017628">
    <property type="protein sequence ID" value="AOW30049.1"/>
    <property type="molecule type" value="Genomic_DNA"/>
</dbReference>
<dbReference type="RefSeq" id="XP_714314.2">
    <property type="nucleotide sequence ID" value="XM_709221.2"/>
</dbReference>
<dbReference type="SMR" id="Q59XQ1"/>
<dbReference type="FunCoup" id="Q59XQ1">
    <property type="interactions" value="79"/>
</dbReference>
<dbReference type="STRING" id="237561.Q59XQ1"/>
<dbReference type="EnsemblFungi" id="C6_01030W_A-T">
    <property type="protein sequence ID" value="C6_01030W_A-T-p1"/>
    <property type="gene ID" value="C6_01030W_A"/>
</dbReference>
<dbReference type="GeneID" id="3644051"/>
<dbReference type="KEGG" id="cal:CAALFM_C601030WA"/>
<dbReference type="CGD" id="CAL0000200084">
    <property type="gene designation" value="HAL22"/>
</dbReference>
<dbReference type="VEuPathDB" id="FungiDB:C6_01030W_A"/>
<dbReference type="HOGENOM" id="CLU_033446_2_1_1"/>
<dbReference type="InParanoid" id="Q59XQ1"/>
<dbReference type="OrthoDB" id="411145at2759"/>
<dbReference type="PRO" id="PR:Q59XQ1"/>
<dbReference type="Proteomes" id="UP000000559">
    <property type="component" value="Chromosome 6"/>
</dbReference>
<dbReference type="GO" id="GO:0008441">
    <property type="term" value="F:3'(2'),5'-bisphosphate nucleotidase activity"/>
    <property type="evidence" value="ECO:0000318"/>
    <property type="project" value="GO_Central"/>
</dbReference>
<dbReference type="GO" id="GO:0046872">
    <property type="term" value="F:metal ion binding"/>
    <property type="evidence" value="ECO:0007669"/>
    <property type="project" value="UniProtKB-KW"/>
</dbReference>
<dbReference type="GO" id="GO:0000166">
    <property type="term" value="F:nucleotide binding"/>
    <property type="evidence" value="ECO:0007669"/>
    <property type="project" value="UniProtKB-KW"/>
</dbReference>
<dbReference type="GO" id="GO:0008652">
    <property type="term" value="P:amino acid biosynthetic process"/>
    <property type="evidence" value="ECO:0007669"/>
    <property type="project" value="UniProtKB-KW"/>
</dbReference>
<dbReference type="GO" id="GO:0046854">
    <property type="term" value="P:phosphatidylinositol phosphate biosynthetic process"/>
    <property type="evidence" value="ECO:0007669"/>
    <property type="project" value="InterPro"/>
</dbReference>
<dbReference type="GO" id="GO:0000103">
    <property type="term" value="P:sulfate assimilation"/>
    <property type="evidence" value="ECO:0000318"/>
    <property type="project" value="GO_Central"/>
</dbReference>
<dbReference type="CDD" id="cd01517">
    <property type="entry name" value="PAP_phosphatase"/>
    <property type="match status" value="1"/>
</dbReference>
<dbReference type="FunFam" id="3.30.540.10:FF:000015">
    <property type="entry name" value="3',5'-bisphosphate nucleotidase"/>
    <property type="match status" value="1"/>
</dbReference>
<dbReference type="FunFam" id="3.40.190.80:FF:000003">
    <property type="entry name" value="PAP-specific phosphatase HAL2-like"/>
    <property type="match status" value="1"/>
</dbReference>
<dbReference type="Gene3D" id="3.40.190.80">
    <property type="match status" value="1"/>
</dbReference>
<dbReference type="Gene3D" id="3.30.540.10">
    <property type="entry name" value="Fructose-1,6-Bisphosphatase, subunit A, domain 1"/>
    <property type="match status" value="1"/>
</dbReference>
<dbReference type="InterPro" id="IPR006239">
    <property type="entry name" value="DPNP"/>
</dbReference>
<dbReference type="InterPro" id="IPR020583">
    <property type="entry name" value="Inositol_monoP_metal-BS"/>
</dbReference>
<dbReference type="InterPro" id="IPR051090">
    <property type="entry name" value="Inositol_monoP_superfamily"/>
</dbReference>
<dbReference type="InterPro" id="IPR000760">
    <property type="entry name" value="Inositol_monophosphatase-like"/>
</dbReference>
<dbReference type="InterPro" id="IPR020550">
    <property type="entry name" value="Inositol_monophosphatase_CS"/>
</dbReference>
<dbReference type="NCBIfam" id="TIGR01330">
    <property type="entry name" value="bisphos_HAL2"/>
    <property type="match status" value="1"/>
</dbReference>
<dbReference type="PANTHER" id="PTHR43200:SF6">
    <property type="entry name" value="3'(2'),5'-BISPHOSPHATE NUCLEOTIDASE"/>
    <property type="match status" value="1"/>
</dbReference>
<dbReference type="PANTHER" id="PTHR43200">
    <property type="entry name" value="PHOSPHATASE"/>
    <property type="match status" value="1"/>
</dbReference>
<dbReference type="Pfam" id="PF00459">
    <property type="entry name" value="Inositol_P"/>
    <property type="match status" value="1"/>
</dbReference>
<dbReference type="SUPFAM" id="SSF56655">
    <property type="entry name" value="Carbohydrate phosphatase"/>
    <property type="match status" value="1"/>
</dbReference>
<dbReference type="PROSITE" id="PS00629">
    <property type="entry name" value="IMP_1"/>
    <property type="match status" value="1"/>
</dbReference>
<dbReference type="PROSITE" id="PS00630">
    <property type="entry name" value="IMP_2"/>
    <property type="match status" value="1"/>
</dbReference>
<protein>
    <recommendedName>
        <fullName>3'(2'),5'-bisphosphate nucleotidase 2</fullName>
        <ecNumber evidence="1">3.1.3.7</ecNumber>
    </recommendedName>
    <alternativeName>
        <fullName>3'(2'),5-bisphosphonucleoside 3'(2')-phosphohydrolase 2</fullName>
    </alternativeName>
    <alternativeName>
        <fullName>DPNPase 2</fullName>
    </alternativeName>
    <alternativeName>
        <fullName>Halotolerance protein HAL22</fullName>
    </alternativeName>
</protein>
<reference key="1">
    <citation type="journal article" date="2004" name="Proc. Natl. Acad. Sci. U.S.A.">
        <title>The diploid genome sequence of Candida albicans.</title>
        <authorList>
            <person name="Jones T."/>
            <person name="Federspiel N.A."/>
            <person name="Chibana H."/>
            <person name="Dungan J."/>
            <person name="Kalman S."/>
            <person name="Magee B.B."/>
            <person name="Newport G."/>
            <person name="Thorstenson Y.R."/>
            <person name="Agabian N."/>
            <person name="Magee P.T."/>
            <person name="Davis R.W."/>
            <person name="Scherer S."/>
        </authorList>
    </citation>
    <scope>NUCLEOTIDE SEQUENCE [LARGE SCALE GENOMIC DNA]</scope>
    <source>
        <strain>SC5314 / ATCC MYA-2876</strain>
    </source>
</reference>
<reference key="2">
    <citation type="journal article" date="2007" name="Genome Biol.">
        <title>Assembly of the Candida albicans genome into sixteen supercontigs aligned on the eight chromosomes.</title>
        <authorList>
            <person name="van het Hoog M."/>
            <person name="Rast T.J."/>
            <person name="Martchenko M."/>
            <person name="Grindle S."/>
            <person name="Dignard D."/>
            <person name="Hogues H."/>
            <person name="Cuomo C."/>
            <person name="Berriman M."/>
            <person name="Scherer S."/>
            <person name="Magee B.B."/>
            <person name="Whiteway M."/>
            <person name="Chibana H."/>
            <person name="Nantel A."/>
            <person name="Magee P.T."/>
        </authorList>
    </citation>
    <scope>GENOME REANNOTATION</scope>
    <source>
        <strain>SC5314 / ATCC MYA-2876</strain>
    </source>
</reference>
<reference key="3">
    <citation type="journal article" date="2013" name="Genome Biol.">
        <title>Assembly of a phased diploid Candida albicans genome facilitates allele-specific measurements and provides a simple model for repeat and indel structure.</title>
        <authorList>
            <person name="Muzzey D."/>
            <person name="Schwartz K."/>
            <person name="Weissman J.S."/>
            <person name="Sherlock G."/>
        </authorList>
    </citation>
    <scope>NUCLEOTIDE SEQUENCE [LARGE SCALE GENOMIC DNA]</scope>
    <scope>GENOME REANNOTATION</scope>
    <source>
        <strain>SC5314 / ATCC MYA-2876</strain>
    </source>
</reference>
<feature type="chain" id="PRO_0000245648" description="3'(2'),5'-bisphosphate nucleotidase 2">
    <location>
        <begin position="1"/>
        <end position="358"/>
    </location>
</feature>
<feature type="active site" description="Proton acceptor" evidence="1">
    <location>
        <position position="54"/>
    </location>
</feature>
<feature type="active site" description="Proton acceptor" evidence="1">
    <location>
        <position position="146"/>
    </location>
</feature>
<feature type="binding site" evidence="1">
    <location>
        <position position="77"/>
    </location>
    <ligand>
        <name>Mg(2+)</name>
        <dbReference type="ChEBI" id="CHEBI:18420"/>
        <label>1</label>
    </ligand>
</feature>
<feature type="binding site" evidence="1">
    <location>
        <position position="77"/>
    </location>
    <ligand>
        <name>Mg(2+)</name>
        <dbReference type="ChEBI" id="CHEBI:18420"/>
        <label>3</label>
    </ligand>
</feature>
<feature type="binding site" evidence="1">
    <location>
        <position position="141"/>
    </location>
    <ligand>
        <name>Mg(2+)</name>
        <dbReference type="ChEBI" id="CHEBI:18420"/>
        <label>1</label>
    </ligand>
</feature>
<feature type="binding site" evidence="1">
    <location>
        <position position="141"/>
    </location>
    <ligand>
        <name>Mg(2+)</name>
        <dbReference type="ChEBI" id="CHEBI:18420"/>
        <label>2</label>
    </ligand>
</feature>
<feature type="binding site" evidence="1">
    <location>
        <position position="143"/>
    </location>
    <ligand>
        <name>Mg(2+)</name>
        <dbReference type="ChEBI" id="CHEBI:18420"/>
        <label>1</label>
    </ligand>
</feature>
<feature type="binding site" evidence="1">
    <location>
        <position position="144"/>
    </location>
    <ligand>
        <name>Mg(2+)</name>
        <dbReference type="ChEBI" id="CHEBI:18420"/>
        <label>2</label>
    </ligand>
</feature>
<feature type="binding site" evidence="1">
    <location>
        <position position="146"/>
    </location>
    <ligand>
        <name>adenosine 3',5'-bisphosphate</name>
        <dbReference type="ChEBI" id="CHEBI:58343"/>
    </ligand>
</feature>
<feature type="binding site" evidence="1">
    <location>
        <position position="243"/>
    </location>
    <ligand>
        <name>adenosine 3',5'-bisphosphate</name>
        <dbReference type="ChEBI" id="CHEBI:58343"/>
    </ligand>
</feature>
<feature type="binding site" evidence="1">
    <location>
        <position position="243"/>
    </location>
    <ligand>
        <name>AMP</name>
        <dbReference type="ChEBI" id="CHEBI:456215"/>
    </ligand>
</feature>
<feature type="binding site" evidence="1">
    <location>
        <position position="272"/>
    </location>
    <ligand>
        <name>adenosine 3',5'-bisphosphate</name>
        <dbReference type="ChEBI" id="CHEBI:58343"/>
    </ligand>
</feature>
<feature type="binding site" evidence="1">
    <location>
        <position position="272"/>
    </location>
    <ligand>
        <name>AMP</name>
        <dbReference type="ChEBI" id="CHEBI:456215"/>
    </ligand>
</feature>
<feature type="binding site" evidence="1">
    <location>
        <position position="275"/>
    </location>
    <ligand>
        <name>adenosine 3',5'-bisphosphate</name>
        <dbReference type="ChEBI" id="CHEBI:58343"/>
    </ligand>
</feature>
<feature type="binding site" evidence="1">
    <location>
        <position position="275"/>
    </location>
    <ligand>
        <name>AMP</name>
        <dbReference type="ChEBI" id="CHEBI:456215"/>
    </ligand>
</feature>
<feature type="binding site" evidence="1">
    <location>
        <position position="289"/>
    </location>
    <ligand>
        <name>adenosine 3',5'-bisphosphate</name>
        <dbReference type="ChEBI" id="CHEBI:58343"/>
    </ligand>
</feature>
<feature type="binding site" evidence="1">
    <location>
        <position position="289"/>
    </location>
    <ligand>
        <name>AMP</name>
        <dbReference type="ChEBI" id="CHEBI:456215"/>
    </ligand>
</feature>
<feature type="binding site" evidence="1">
    <location>
        <position position="302"/>
    </location>
    <ligand>
        <name>adenosine 3',5'-bisphosphate</name>
        <dbReference type="ChEBI" id="CHEBI:58343"/>
    </ligand>
</feature>
<feature type="binding site" evidence="1">
    <location>
        <position position="302"/>
    </location>
    <ligand>
        <name>AMP</name>
        <dbReference type="ChEBI" id="CHEBI:456215"/>
    </ligand>
</feature>
<feature type="binding site" evidence="1">
    <location>
        <position position="302"/>
    </location>
    <ligand>
        <name>Mg(2+)</name>
        <dbReference type="ChEBI" id="CHEBI:18420"/>
        <label>2</label>
    </ligand>
</feature>
<evidence type="ECO:0000250" key="1">
    <source>
        <dbReference type="UniProtKB" id="P32179"/>
    </source>
</evidence>
<evidence type="ECO:0000305" key="2"/>
<name>HAL22_CANAL</name>
<keyword id="KW-0028">Amino-acid biosynthesis</keyword>
<keyword id="KW-0378">Hydrolase</keyword>
<keyword id="KW-0460">Magnesium</keyword>
<keyword id="KW-0479">Metal-binding</keyword>
<keyword id="KW-0547">Nucleotide-binding</keyword>
<keyword id="KW-1185">Reference proteome</keyword>